<proteinExistence type="inferred from homology"/>
<evidence type="ECO:0000255" key="1">
    <source>
        <dbReference type="HAMAP-Rule" id="MF_01386"/>
    </source>
</evidence>
<name>PSBX_GUITH</name>
<reference key="1">
    <citation type="journal article" date="1999" name="J. Mol. Evol.">
        <title>The plastid genome of the cryptophyte alga, Guillardia theta: complete sequence and conserved synteny groups confirm its common ancestry with red algae.</title>
        <authorList>
            <person name="Douglas S.E."/>
            <person name="Penny S.L."/>
        </authorList>
    </citation>
    <scope>NUCLEOTIDE SEQUENCE [LARGE SCALE GENOMIC DNA]</scope>
</reference>
<feature type="chain" id="PRO_0000217288" description="Photosystem II reaction center protein X">
    <location>
        <begin position="1"/>
        <end position="39"/>
    </location>
</feature>
<feature type="transmembrane region" description="Helical" evidence="1">
    <location>
        <begin position="11"/>
        <end position="31"/>
    </location>
</feature>
<comment type="function">
    <text evidence="1">Involved in the binding and/or turnover of quinones at the Q(B) site of photosystem II (PSII). PSII is a light-driven water plastoquinone oxidoreductase, using light energy to abstract electrons from H(2)O, generating a proton gradient subsequently used for ATP formation.</text>
</comment>
<comment type="subunit">
    <text evidence="1">PSII is composed of 1 copy each of membrane proteins PsbA, PsbB, PsbC, PsbD, PsbE, PsbF, PsbH, PsbI, PsbJ, PsbK, PsbL, PsbM, PsbT, PsbX, PsbY, PsbZ, Psb30/Ycf12, at least 3 peripheral proteins of the oxygen-evolving complex and a large number of cofactors. It forms dimeric complexes.</text>
</comment>
<comment type="subcellular location">
    <subcellularLocation>
        <location evidence="1">Plastid</location>
        <location evidence="1">Chloroplast thylakoid membrane</location>
        <topology evidence="1">Single-pass membrane protein</topology>
    </subcellularLocation>
</comment>
<comment type="similarity">
    <text evidence="1">Belongs to the PsbX family. Type 1 subfamily.</text>
</comment>
<geneLocation type="chloroplast"/>
<accession>O78455</accession>
<organism>
    <name type="scientific">Guillardia theta</name>
    <name type="common">Cryptophyte</name>
    <name type="synonym">Cryptomonas phi</name>
    <dbReference type="NCBI Taxonomy" id="55529"/>
    <lineage>
        <taxon>Eukaryota</taxon>
        <taxon>Cryptophyceae</taxon>
        <taxon>Pyrenomonadales</taxon>
        <taxon>Geminigeraceae</taxon>
        <taxon>Guillardia</taxon>
    </lineage>
</organism>
<sequence>MTPSLSAFINSLLLGLFIVVLPIGTALLLVSQSDRVTRN</sequence>
<gene>
    <name evidence="1" type="primary">psbX</name>
</gene>
<protein>
    <recommendedName>
        <fullName evidence="1">Photosystem II reaction center protein X</fullName>
    </recommendedName>
</protein>
<dbReference type="EMBL" id="AF041468">
    <property type="protein sequence ID" value="AAC35646.1"/>
    <property type="molecule type" value="Genomic_DNA"/>
</dbReference>
<dbReference type="RefSeq" id="NP_050712.1">
    <property type="nucleotide sequence ID" value="NC_000926.1"/>
</dbReference>
<dbReference type="SMR" id="O78455"/>
<dbReference type="GeneID" id="857013"/>
<dbReference type="HOGENOM" id="CLU_212837_1_0_1"/>
<dbReference type="GO" id="GO:0009535">
    <property type="term" value="C:chloroplast thylakoid membrane"/>
    <property type="evidence" value="ECO:0007669"/>
    <property type="project" value="UniProtKB-SubCell"/>
</dbReference>
<dbReference type="GO" id="GO:0009523">
    <property type="term" value="C:photosystem II"/>
    <property type="evidence" value="ECO:0007669"/>
    <property type="project" value="UniProtKB-KW"/>
</dbReference>
<dbReference type="GO" id="GO:0015979">
    <property type="term" value="P:photosynthesis"/>
    <property type="evidence" value="ECO:0007669"/>
    <property type="project" value="UniProtKB-UniRule"/>
</dbReference>
<dbReference type="Gene3D" id="1.20.5.510">
    <property type="entry name" value="Single helix bin"/>
    <property type="match status" value="1"/>
</dbReference>
<dbReference type="HAMAP" id="MF_01386">
    <property type="entry name" value="PSII_PsbX_1"/>
    <property type="match status" value="1"/>
</dbReference>
<dbReference type="InterPro" id="IPR009518">
    <property type="entry name" value="PSII_PsbX"/>
</dbReference>
<dbReference type="InterPro" id="IPR023431">
    <property type="entry name" value="PSII_PsbX_type_1_subfam"/>
</dbReference>
<dbReference type="Pfam" id="PF06596">
    <property type="entry name" value="PsbX"/>
    <property type="match status" value="1"/>
</dbReference>
<keyword id="KW-0150">Chloroplast</keyword>
<keyword id="KW-0472">Membrane</keyword>
<keyword id="KW-0602">Photosynthesis</keyword>
<keyword id="KW-0604">Photosystem II</keyword>
<keyword id="KW-0934">Plastid</keyword>
<keyword id="KW-0793">Thylakoid</keyword>
<keyword id="KW-0812">Transmembrane</keyword>
<keyword id="KW-1133">Transmembrane helix</keyword>